<proteinExistence type="evidence at protein level"/>
<accession>O00585</accession>
<accession>Q6ICR7</accession>
<comment type="function">
    <text>Inhibits hemopoiesis and stimulates chemotaxis. Chemotactic in vitro for thymocytes and activated T-cells, but not for B-cells, macrophages, or neutrophils. Shows preferential activity towards naive T-cells. May play a role in mediating homing of lymphocytes to secondary lymphoid organs. Binds to atypical chemokine receptor ACKR4 and mediates the recruitment of beta-arrestin (ARRB1/2) to ACKR4.</text>
</comment>
<comment type="subunit">
    <text evidence="1 4 5 6">Monomer. Binds to CCR7. Interacts with PDPN; relocalizes PDPN to the basolateral membrane (PubMed:14978162). Interacts with TNFAIP6 (via Link domain). Interacts with GPR174 (By similarity).</text>
</comment>
<comment type="interaction">
    <interactant intactId="EBI-953695">
        <id>O00585</id>
    </interactant>
    <interactant intactId="EBI-725342">
        <id>Q99616</id>
        <label>CCL13</label>
    </interactant>
    <organismsDiffer>false</organismsDiffer>
    <experiments>2</experiments>
</comment>
<comment type="interaction">
    <interactant intactId="EBI-953695">
        <id>O00585</id>
    </interactant>
    <interactant intactId="EBI-16640146">
        <id>Q92583</id>
        <label>CCL17</label>
    </interactant>
    <organismsDiffer>false</organismsDiffer>
    <experiments>2</experiments>
</comment>
<comment type="interaction">
    <interactant intactId="EBI-953695">
        <id>O00585</id>
    </interactant>
    <interactant intactId="EBI-7783416">
        <id>Q9Y258</id>
        <label>CCL26</label>
    </interactant>
    <organismsDiffer>false</organismsDiffer>
    <experiments>2</experiments>
</comment>
<comment type="interaction">
    <interactant intactId="EBI-953695">
        <id>O00585</id>
    </interactant>
    <interactant intactId="EBI-7783254">
        <id>Q9NRJ3</id>
        <label>CCL28</label>
    </interactant>
    <organismsDiffer>false</organismsDiffer>
    <experiments>2</experiments>
</comment>
<comment type="interaction">
    <interactant intactId="EBI-953695">
        <id>O00585</id>
    </interactant>
    <interactant intactId="EBI-2848366">
        <id>P13501</id>
        <label>CCL5</label>
    </interactant>
    <organismsDiffer>false</organismsDiffer>
    <experiments>2</experiments>
</comment>
<comment type="interaction">
    <interactant intactId="EBI-953695">
        <id>O00585</id>
    </interactant>
    <interactant intactId="EBI-7815386">
        <id>P02778</id>
        <label>CXCL10</label>
    </interactant>
    <organismsDiffer>false</organismsDiffer>
    <experiments>2</experiments>
</comment>
<comment type="interaction">
    <interactant intactId="EBI-953695">
        <id>O00585</id>
    </interactant>
    <interactant intactId="EBI-3913254">
        <id>P48061</id>
        <label>CXCL12</label>
    </interactant>
    <organismsDiffer>false</organismsDiffer>
    <experiments>2</experiments>
</comment>
<comment type="interaction">
    <interactant intactId="EBI-953695">
        <id>O00585</id>
    </interactant>
    <interactant intactId="EBI-2798068">
        <id>O95715</id>
        <label>CXCL14</label>
    </interactant>
    <organismsDiffer>false</organismsDiffer>
    <experiments>2</experiments>
</comment>
<comment type="interaction">
    <interactant intactId="EBI-953695">
        <id>O00585</id>
    </interactant>
    <interactant intactId="EBI-3911467">
        <id>Q07325</id>
        <label>CXCL9</label>
    </interactant>
    <organismsDiffer>false</organismsDiffer>
    <experiments>2</experiments>
</comment>
<comment type="interaction">
    <interactant intactId="EBI-953695">
        <id>O00585</id>
    </interactant>
    <interactant intactId="EBI-1055254">
        <id>Q8WXH2</id>
        <label>JPH3</label>
    </interactant>
    <organismsDiffer>false</organismsDiffer>
    <experiments>3</experiments>
</comment>
<comment type="interaction">
    <interactant intactId="EBI-953695">
        <id>O00585</id>
    </interactant>
    <interactant intactId="EBI-12865884">
        <id>Q5XKR4</id>
        <label>OTP</label>
    </interactant>
    <organismsDiffer>false</organismsDiffer>
    <experiments>3</experiments>
</comment>
<comment type="interaction">
    <interactant intactId="EBI-953695">
        <id>O00585</id>
    </interactant>
    <interactant intactId="EBI-2565740">
        <id>P02776</id>
        <label>PF4</label>
    </interactant>
    <organismsDiffer>false</organismsDiffer>
    <experiments>2</experiments>
</comment>
<comment type="interaction">
    <interactant intactId="EBI-953695">
        <id>O00585</id>
    </interactant>
    <interactant intactId="EBI-1223944">
        <id>P10720</id>
        <label>PF4V1</label>
    </interactant>
    <organismsDiffer>false</organismsDiffer>
    <experiments>2</experiments>
</comment>
<comment type="interaction">
    <interactant intactId="EBI-953695">
        <id>O00585</id>
    </interactant>
    <interactant intactId="EBI-12845616">
        <id>Q6UX40</id>
        <label>TMEM107</label>
    </interactant>
    <organismsDiffer>false</organismsDiffer>
    <experiments>3</experiments>
</comment>
<comment type="interaction">
    <interactant intactId="EBI-953695">
        <id>O00585</id>
    </interactant>
    <interactant intactId="EBI-10243654">
        <id>Q5BVD1</id>
        <label>TTMP</label>
    </interactant>
    <organismsDiffer>false</organismsDiffer>
    <experiments>3</experiments>
</comment>
<comment type="subcellular location">
    <subcellularLocation>
        <location>Secreted</location>
    </subcellularLocation>
</comment>
<comment type="tissue specificity">
    <text>Highly expressed in high endothelial venules of lymph nodes, spleen and appendix. Intermediate levels found in small intestine, thyroid gland and trachea. Low level expression in thymus, bone marrow, liver, and pancreas. Also found in tonsil, fetal heart and fetal spleen.</text>
</comment>
<comment type="similarity">
    <text evidence="8">Belongs to the intercrine beta (chemokine CC) family.</text>
</comment>
<comment type="online information" name="Wikipedia">
    <link uri="https://en.wikipedia.org/wiki/CCL21"/>
    <text>CCL21 entry</text>
</comment>
<feature type="signal peptide" evidence="7">
    <location>
        <begin position="1"/>
        <end position="23"/>
    </location>
</feature>
<feature type="chain" id="PRO_0000005220" description="C-C motif chemokine 21">
    <location>
        <begin position="24"/>
        <end position="134"/>
    </location>
</feature>
<feature type="region of interest" description="Disordered" evidence="3">
    <location>
        <begin position="88"/>
        <end position="134"/>
    </location>
</feature>
<feature type="region of interest" description="C-terminal basic extension">
    <location>
        <begin position="98"/>
        <end position="134"/>
    </location>
</feature>
<feature type="compositionally biased region" description="Basic residues" evidence="3">
    <location>
        <begin position="112"/>
        <end position="122"/>
    </location>
</feature>
<feature type="compositionally biased region" description="Basic and acidic residues" evidence="3">
    <location>
        <begin position="123"/>
        <end position="134"/>
    </location>
</feature>
<feature type="disulfide bond" evidence="5">
    <location>
        <begin position="31"/>
        <end position="57"/>
    </location>
</feature>
<feature type="disulfide bond" evidence="5">
    <location>
        <begin position="32"/>
        <end position="75"/>
    </location>
</feature>
<feature type="disulfide bond" evidence="2">
    <location>
        <begin position="103"/>
        <end position="122"/>
    </location>
</feature>
<feature type="helix" evidence="14">
    <location>
        <begin position="42"/>
        <end position="44"/>
    </location>
</feature>
<feature type="strand" evidence="14">
    <location>
        <begin position="45"/>
        <end position="51"/>
    </location>
</feature>
<feature type="turn" evidence="13">
    <location>
        <begin position="53"/>
        <end position="56"/>
    </location>
</feature>
<feature type="strand" evidence="14">
    <location>
        <begin position="61"/>
        <end position="68"/>
    </location>
</feature>
<feature type="strand" evidence="14">
    <location>
        <begin position="74"/>
        <end position="76"/>
    </location>
</feature>
<feature type="helix" evidence="14">
    <location>
        <begin position="81"/>
        <end position="90"/>
    </location>
</feature>
<evidence type="ECO:0000250" key="1">
    <source>
        <dbReference type="UniProtKB" id="P84444"/>
    </source>
</evidence>
<evidence type="ECO:0000255" key="2"/>
<evidence type="ECO:0000256" key="3">
    <source>
        <dbReference type="SAM" id="MobiDB-lite"/>
    </source>
</evidence>
<evidence type="ECO:0000269" key="4">
    <source>
    </source>
</evidence>
<evidence type="ECO:0000269" key="5">
    <source>
    </source>
</evidence>
<evidence type="ECO:0000269" key="6">
    <source>
    </source>
</evidence>
<evidence type="ECO:0000269" key="7">
    <source>
    </source>
</evidence>
<evidence type="ECO:0000305" key="8"/>
<evidence type="ECO:0000312" key="9">
    <source>
        <dbReference type="EMBL" id="AAQ13417.1"/>
    </source>
</evidence>
<evidence type="ECO:0000312" key="10">
    <source>
        <dbReference type="EMBL" id="ABK41948.1"/>
    </source>
</evidence>
<evidence type="ECO:0000312" key="11">
    <source>
        <dbReference type="EMBL" id="BAG34842.1"/>
    </source>
</evidence>
<evidence type="ECO:0000312" key="12">
    <source>
        <dbReference type="EMBL" id="CAG29322.1"/>
    </source>
</evidence>
<evidence type="ECO:0007829" key="13">
    <source>
        <dbReference type="PDB" id="2L4N"/>
    </source>
</evidence>
<evidence type="ECO:0007829" key="14">
    <source>
        <dbReference type="PDB" id="5EKI"/>
    </source>
</evidence>
<reference key="1">
    <citation type="journal article" date="1997" name="J. Biol. Chem.">
        <title>Molecular cloning of a novel human CC chemokine secondary lymphoid-tissue chemokine that is a potent chemoattractant for lymphocytes and mapped to chromosome 9p13.</title>
        <authorList>
            <person name="Nagira M."/>
            <person name="Imai T."/>
            <person name="Hieshima K."/>
            <person name="Kusuda J."/>
            <person name="Ridanpaeae M."/>
            <person name="Takagi S."/>
            <person name="Nishimura M."/>
            <person name="Kakizaki M."/>
            <person name="Nomiyama H."/>
            <person name="Yoshie O."/>
        </authorList>
    </citation>
    <scope>NUCLEOTIDE SEQUENCE [MRNA]</scope>
</reference>
<reference key="2">
    <citation type="journal article" date="1997" name="J. Immunol.">
        <title>Identification and characterization of a novel beta chemokine containing six conserved cysteines.</title>
        <authorList>
            <person name="Hedrick J.A."/>
            <person name="Zlotnik A."/>
        </authorList>
    </citation>
    <scope>NUCLEOTIDE SEQUENCE [MRNA]</scope>
</reference>
<reference key="3">
    <citation type="journal article" date="1997" name="J. Immunol.">
        <title>Isolation and characterization of Exodus-2, a novel C-C chemokine with a unique 37-amino acid carboxyl-terminal extension.</title>
        <authorList>
            <person name="Hromas R."/>
            <person name="Kim C.H."/>
            <person name="Klemsz M."/>
            <person name="Krathwohl M."/>
            <person name="Fife K."/>
            <person name="Cooper S."/>
            <person name="Schnizlein-Bick C."/>
            <person name="Broxmeyer H.E."/>
        </authorList>
    </citation>
    <scope>NUCLEOTIDE SEQUENCE [MRNA]</scope>
    <scope>PROTEIN SEQUENCE OF 24-33</scope>
</reference>
<reference key="4">
    <citation type="journal article" date="1998" name="Proc. Natl. Acad. Sci. U.S.A.">
        <title>A chemokine expressed in lymphoid high endothelial venules promotes the adhesion and chemotaxis of naive T lymphocytes.</title>
        <authorList>
            <person name="Gunn M.D."/>
            <person name="Tangemann K."/>
            <person name="Tam C."/>
            <person name="Cyster J.G."/>
            <person name="Rosen S.D."/>
            <person name="Williams L.T."/>
        </authorList>
    </citation>
    <scope>NUCLEOTIDE SEQUENCE [MRNA]</scope>
    <scope>CHARACTERIZATION</scope>
</reference>
<reference evidence="9" key="5">
    <citation type="submission" date="1997-10" db="EMBL/GenBank/DDBJ databases">
        <title>Isolation of human genomic DNA fragment coding an efficient chemoattractant for lymphocytes.</title>
        <authorList>
            <person name="Fu Q."/>
            <person name="Yu L."/>
            <person name="Bi A."/>
            <person name="Zhang Q."/>
        </authorList>
    </citation>
    <scope>NUCLEOTIDE SEQUENCE [GENOMIC DNA]</scope>
</reference>
<reference key="6">
    <citation type="submission" date="1998-04" db="EMBL/GenBank/DDBJ databases">
        <title>Genomic organisation of human SLC.</title>
        <authorList>
            <person name="Reiterer P."/>
            <person name="Bernhardt G."/>
            <person name="Lipp M."/>
        </authorList>
    </citation>
    <scope>NUCLEOTIDE SEQUENCE [GENOMIC DNA]</scope>
</reference>
<reference evidence="10" key="7">
    <citation type="submission" date="2006-10" db="EMBL/GenBank/DDBJ databases">
        <authorList>
            <person name="Livingston R.J."/>
            <person name="Shaffer T."/>
            <person name="McFarland I."/>
            <person name="Nguyen C.P."/>
            <person name="Stanaway I.B."/>
            <person name="Rajkumar N."/>
            <person name="Johnson E.J."/>
            <person name="da Ponte S.H."/>
            <person name="Willa H."/>
            <person name="Ahearn M.O."/>
            <person name="Bertucci C."/>
            <person name="Acklestad J."/>
            <person name="Carroll A."/>
            <person name="Swanson J."/>
            <person name="Gildersleeve H.I."/>
            <person name="Nickerson D.A."/>
        </authorList>
    </citation>
    <scope>NUCLEOTIDE SEQUENCE [GENOMIC DNA]</scope>
</reference>
<reference key="8">
    <citation type="journal article" date="2003" name="Genome Res.">
        <title>The secreted protein discovery initiative (SPDI), a large-scale effort to identify novel human secreted and transmembrane proteins: a bioinformatics assessment.</title>
        <authorList>
            <person name="Clark H.F."/>
            <person name="Gurney A.L."/>
            <person name="Abaya E."/>
            <person name="Baker K."/>
            <person name="Baldwin D.T."/>
            <person name="Brush J."/>
            <person name="Chen J."/>
            <person name="Chow B."/>
            <person name="Chui C."/>
            <person name="Crowley C."/>
            <person name="Currell B."/>
            <person name="Deuel B."/>
            <person name="Dowd P."/>
            <person name="Eaton D."/>
            <person name="Foster J.S."/>
            <person name="Grimaldi C."/>
            <person name="Gu Q."/>
            <person name="Hass P.E."/>
            <person name="Heldens S."/>
            <person name="Huang A."/>
            <person name="Kim H.S."/>
            <person name="Klimowski L."/>
            <person name="Jin Y."/>
            <person name="Johnson S."/>
            <person name="Lee J."/>
            <person name="Lewis L."/>
            <person name="Liao D."/>
            <person name="Mark M.R."/>
            <person name="Robbie E."/>
            <person name="Sanchez C."/>
            <person name="Schoenfeld J."/>
            <person name="Seshagiri S."/>
            <person name="Simmons L."/>
            <person name="Singh J."/>
            <person name="Smith V."/>
            <person name="Stinson J."/>
            <person name="Vagts A."/>
            <person name="Vandlen R.L."/>
            <person name="Watanabe C."/>
            <person name="Wieand D."/>
            <person name="Woods K."/>
            <person name="Xie M.-H."/>
            <person name="Yansura D.G."/>
            <person name="Yi S."/>
            <person name="Yu G."/>
            <person name="Yuan J."/>
            <person name="Zhang M."/>
            <person name="Zhang Z."/>
            <person name="Goddard A.D."/>
            <person name="Wood W.I."/>
            <person name="Godowski P.J."/>
            <person name="Gray A.M."/>
        </authorList>
    </citation>
    <scope>NUCLEOTIDE SEQUENCE [LARGE SCALE MRNA]</scope>
</reference>
<reference evidence="11" key="9">
    <citation type="journal article" date="2004" name="Nat. Genet.">
        <title>Complete sequencing and characterization of 21,243 full-length human cDNAs.</title>
        <authorList>
            <person name="Ota T."/>
            <person name="Suzuki Y."/>
            <person name="Nishikawa T."/>
            <person name="Otsuki T."/>
            <person name="Sugiyama T."/>
            <person name="Irie R."/>
            <person name="Wakamatsu A."/>
            <person name="Hayashi K."/>
            <person name="Sato H."/>
            <person name="Nagai K."/>
            <person name="Kimura K."/>
            <person name="Makita H."/>
            <person name="Sekine M."/>
            <person name="Obayashi M."/>
            <person name="Nishi T."/>
            <person name="Shibahara T."/>
            <person name="Tanaka T."/>
            <person name="Ishii S."/>
            <person name="Yamamoto J."/>
            <person name="Saito K."/>
            <person name="Kawai Y."/>
            <person name="Isono Y."/>
            <person name="Nakamura Y."/>
            <person name="Nagahari K."/>
            <person name="Murakami K."/>
            <person name="Yasuda T."/>
            <person name="Iwayanagi T."/>
            <person name="Wagatsuma M."/>
            <person name="Shiratori A."/>
            <person name="Sudo H."/>
            <person name="Hosoiri T."/>
            <person name="Kaku Y."/>
            <person name="Kodaira H."/>
            <person name="Kondo H."/>
            <person name="Sugawara M."/>
            <person name="Takahashi M."/>
            <person name="Kanda K."/>
            <person name="Yokoi T."/>
            <person name="Furuya T."/>
            <person name="Kikkawa E."/>
            <person name="Omura Y."/>
            <person name="Abe K."/>
            <person name="Kamihara K."/>
            <person name="Katsuta N."/>
            <person name="Sato K."/>
            <person name="Tanikawa M."/>
            <person name="Yamazaki M."/>
            <person name="Ninomiya K."/>
            <person name="Ishibashi T."/>
            <person name="Yamashita H."/>
            <person name="Murakawa K."/>
            <person name="Fujimori K."/>
            <person name="Tanai H."/>
            <person name="Kimata M."/>
            <person name="Watanabe M."/>
            <person name="Hiraoka S."/>
            <person name="Chiba Y."/>
            <person name="Ishida S."/>
            <person name="Ono Y."/>
            <person name="Takiguchi S."/>
            <person name="Watanabe S."/>
            <person name="Yosida M."/>
            <person name="Hotuta T."/>
            <person name="Kusano J."/>
            <person name="Kanehori K."/>
            <person name="Takahashi-Fujii A."/>
            <person name="Hara H."/>
            <person name="Tanase T.-O."/>
            <person name="Nomura Y."/>
            <person name="Togiya S."/>
            <person name="Komai F."/>
            <person name="Hara R."/>
            <person name="Takeuchi K."/>
            <person name="Arita M."/>
            <person name="Imose N."/>
            <person name="Musashino K."/>
            <person name="Yuuki H."/>
            <person name="Oshima A."/>
            <person name="Sasaki N."/>
            <person name="Aotsuka S."/>
            <person name="Yoshikawa Y."/>
            <person name="Matsunawa H."/>
            <person name="Ichihara T."/>
            <person name="Shiohata N."/>
            <person name="Sano S."/>
            <person name="Moriya S."/>
            <person name="Momiyama H."/>
            <person name="Satoh N."/>
            <person name="Takami S."/>
            <person name="Terashima Y."/>
            <person name="Suzuki O."/>
            <person name="Nakagawa S."/>
            <person name="Senoh A."/>
            <person name="Mizoguchi H."/>
            <person name="Goto Y."/>
            <person name="Shimizu F."/>
            <person name="Wakebe H."/>
            <person name="Hishigaki H."/>
            <person name="Watanabe T."/>
            <person name="Sugiyama A."/>
            <person name="Takemoto M."/>
            <person name="Kawakami B."/>
            <person name="Yamazaki M."/>
            <person name="Watanabe K."/>
            <person name="Kumagai A."/>
            <person name="Itakura S."/>
            <person name="Fukuzumi Y."/>
            <person name="Fujimori Y."/>
            <person name="Komiyama M."/>
            <person name="Tashiro H."/>
            <person name="Tanigami A."/>
            <person name="Fujiwara T."/>
            <person name="Ono T."/>
            <person name="Yamada K."/>
            <person name="Fujii Y."/>
            <person name="Ozaki K."/>
            <person name="Hirao M."/>
            <person name="Ohmori Y."/>
            <person name="Kawabata A."/>
            <person name="Hikiji T."/>
            <person name="Kobatake N."/>
            <person name="Inagaki H."/>
            <person name="Ikema Y."/>
            <person name="Okamoto S."/>
            <person name="Okitani R."/>
            <person name="Kawakami T."/>
            <person name="Noguchi S."/>
            <person name="Itoh T."/>
            <person name="Shigeta K."/>
            <person name="Senba T."/>
            <person name="Matsumura K."/>
            <person name="Nakajima Y."/>
            <person name="Mizuno T."/>
            <person name="Morinaga M."/>
            <person name="Sasaki M."/>
            <person name="Togashi T."/>
            <person name="Oyama M."/>
            <person name="Hata H."/>
            <person name="Watanabe M."/>
            <person name="Komatsu T."/>
            <person name="Mizushima-Sugano J."/>
            <person name="Satoh T."/>
            <person name="Shirai Y."/>
            <person name="Takahashi Y."/>
            <person name="Nakagawa K."/>
            <person name="Okumura K."/>
            <person name="Nagase T."/>
            <person name="Nomura N."/>
            <person name="Kikuchi H."/>
            <person name="Masuho Y."/>
            <person name="Yamashita R."/>
            <person name="Nakai K."/>
            <person name="Yada T."/>
            <person name="Nakamura Y."/>
            <person name="Ohara O."/>
            <person name="Isogai T."/>
            <person name="Sugano S."/>
        </authorList>
    </citation>
    <scope>NUCLEOTIDE SEQUENCE [LARGE SCALE MRNA]</scope>
    <source>
        <tissue evidence="11">Spleen</tissue>
    </source>
</reference>
<reference evidence="12" key="10">
    <citation type="submission" date="2004-05" db="EMBL/GenBank/DDBJ databases">
        <title>Cloning of human full open reading frames in Gateway(TM) system entry vector (pDONR201).</title>
        <authorList>
            <person name="Ebert L."/>
            <person name="Schick M."/>
            <person name="Neubert P."/>
            <person name="Schatten R."/>
            <person name="Henze S."/>
            <person name="Korn B."/>
        </authorList>
    </citation>
    <scope>NUCLEOTIDE SEQUENCE [LARGE SCALE MRNA]</scope>
</reference>
<reference key="11">
    <citation type="submission" date="2005-09" db="EMBL/GenBank/DDBJ databases">
        <authorList>
            <person name="Mural R.J."/>
            <person name="Istrail S."/>
            <person name="Sutton G.G."/>
            <person name="Florea L."/>
            <person name="Halpern A.L."/>
            <person name="Mobarry C.M."/>
            <person name="Lippert R."/>
            <person name="Walenz B."/>
            <person name="Shatkay H."/>
            <person name="Dew I."/>
            <person name="Miller J.R."/>
            <person name="Flanigan M.J."/>
            <person name="Edwards N.J."/>
            <person name="Bolanos R."/>
            <person name="Fasulo D."/>
            <person name="Halldorsson B.V."/>
            <person name="Hannenhalli S."/>
            <person name="Turner R."/>
            <person name="Yooseph S."/>
            <person name="Lu F."/>
            <person name="Nusskern D.R."/>
            <person name="Shue B.C."/>
            <person name="Zheng X.H."/>
            <person name="Zhong F."/>
            <person name="Delcher A.L."/>
            <person name="Huson D.H."/>
            <person name="Kravitz S.A."/>
            <person name="Mouchard L."/>
            <person name="Reinert K."/>
            <person name="Remington K.A."/>
            <person name="Clark A.G."/>
            <person name="Waterman M.S."/>
            <person name="Eichler E.E."/>
            <person name="Adams M.D."/>
            <person name="Hunkapiller M.W."/>
            <person name="Myers E.W."/>
            <person name="Venter J.C."/>
        </authorList>
    </citation>
    <scope>NUCLEOTIDE SEQUENCE [LARGE SCALE GENOMIC DNA]</scope>
</reference>
<reference key="12">
    <citation type="journal article" date="2004" name="Genome Res.">
        <title>The status, quality, and expansion of the NIH full-length cDNA project: the Mammalian Gene Collection (MGC).</title>
        <authorList>
            <consortium name="The MGC Project Team"/>
        </authorList>
    </citation>
    <scope>NUCLEOTIDE SEQUENCE [LARGE SCALE MRNA]</scope>
    <source>
        <tissue>Pancreas</tissue>
        <tissue>Spleen</tissue>
    </source>
</reference>
<reference key="13">
    <citation type="journal article" date="1998" name="J. Biol. Chem.">
        <title>Secondary lymphoid-tissue chemokine is a functional ligand for the CC chemokine receptor CCR7.</title>
        <authorList>
            <person name="Yoshida R."/>
            <person name="Nagira M."/>
            <person name="Kitaura M."/>
            <person name="Imagawa N."/>
            <person name="Imai T."/>
            <person name="Yoshie O."/>
        </authorList>
    </citation>
    <scope>RECEPTOR INTERACTION</scope>
</reference>
<reference key="14">
    <citation type="journal article" date="2004" name="J. Am. Soc. Nephrol.">
        <title>Lymphatic neoangiogenesis in human kidney transplants is associated with immunologically active lymphocytic infiltrates.</title>
        <authorList>
            <person name="Kerjaschki D."/>
            <person name="Regele H.M."/>
            <person name="Moosberger I."/>
            <person name="Nagy-Bojarski K."/>
            <person name="Watschinger B."/>
            <person name="Soleiman A."/>
            <person name="Birner P."/>
            <person name="Krieger S."/>
            <person name="Hovorka A."/>
            <person name="Silberhumer G."/>
            <person name="Laakkonen P."/>
            <person name="Petrova T."/>
            <person name="Langer B."/>
            <person name="Raab I."/>
        </authorList>
    </citation>
    <scope>INTERACTION WITH PDPN</scope>
</reference>
<reference key="15">
    <citation type="journal article" date="2013" name="J. Biol. Chem.">
        <title>Beta-arrestin recruitment and G protein signaling by the atypical human chemokine decoy receptor CCX-CKR.</title>
        <authorList>
            <person name="Watts A.O."/>
            <person name="Verkaar F."/>
            <person name="van der Lee M.M."/>
            <person name="Timmerman C.A."/>
            <person name="Kuijer M."/>
            <person name="van Offenbeek J."/>
            <person name="van Lith L.H."/>
            <person name="Smit M.J."/>
            <person name="Leurs R."/>
            <person name="Zaman G.J."/>
            <person name="Vischer H.F."/>
        </authorList>
    </citation>
    <scope>RECEPTOR INTERACTION</scope>
</reference>
<reference key="16">
    <citation type="journal article" date="2016" name="J. Biol. Chem.">
        <title>The Anti-inflammatory Protein TSG-6 Regulates Chemokine Function by Inhibiting Chemokine/Glycosaminoglycan Interactions.</title>
        <authorList>
            <person name="Dyer D.P."/>
            <person name="Salanga C.L."/>
            <person name="Johns S.C."/>
            <person name="Valdambrini E."/>
            <person name="Fuster M.M."/>
            <person name="Milner C.M."/>
            <person name="Day A.J."/>
            <person name="Handel T.M."/>
        </authorList>
    </citation>
    <scope>INTERACTION WITH TNFAIP6</scope>
</reference>
<reference key="17">
    <citation type="journal article" date="2012" name="Biochemistry">
        <title>Solution structure of CCL21 and identification of a putative CCR7 binding site.</title>
        <authorList>
            <person name="Love M."/>
            <person name="Sandberg J.L."/>
            <person name="Ziarek J.J."/>
            <person name="Gerarden K.P."/>
            <person name="Rode R.R."/>
            <person name="Jensen D.R."/>
            <person name="McCaslin D.R."/>
            <person name="Peterson F.C."/>
            <person name="Veldkamp C.T."/>
        </authorList>
    </citation>
    <scope>STRUCTURE BY NMR OF 24-134</scope>
    <scope>SUBUNIT</scope>
    <scope>DISULFIDE BONDS</scope>
</reference>
<gene>
    <name type="primary">CCL21</name>
    <name type="synonym">SCYA21</name>
    <name type="ORF">UNQ784/PRO1600</name>
</gene>
<sequence length="134" mass="14646">MAQSLALSLLILVLAFGIPRTQGSDGGAQDCCLKYSQRKIPAKVVRSYRKQEPSLGCSIPAILFLPRKRSQAELCADPKELWVQQLMQHLDKTPSPQKPAQGCRKDRGASKTGKKGKGSKGCKRTERSQTPKGP</sequence>
<dbReference type="EMBL" id="AB002409">
    <property type="protein sequence ID" value="BAA21817.1"/>
    <property type="molecule type" value="mRNA"/>
</dbReference>
<dbReference type="EMBL" id="AF001979">
    <property type="protein sequence ID" value="AAB86594.1"/>
    <property type="molecule type" value="mRNA"/>
</dbReference>
<dbReference type="EMBL" id="U88320">
    <property type="protein sequence ID" value="AAB91454.1"/>
    <property type="molecule type" value="mRNA"/>
</dbReference>
<dbReference type="EMBL" id="AF030572">
    <property type="protein sequence ID" value="AAQ13417.1"/>
    <property type="molecule type" value="Genomic_DNA"/>
</dbReference>
<dbReference type="EMBL" id="AJ005654">
    <property type="protein sequence ID" value="CAA06653.1"/>
    <property type="molecule type" value="Genomic_DNA"/>
</dbReference>
<dbReference type="EMBL" id="EF064765">
    <property type="protein sequence ID" value="ABK41948.1"/>
    <property type="molecule type" value="Genomic_DNA"/>
</dbReference>
<dbReference type="EMBL" id="AY358887">
    <property type="protein sequence ID" value="AAQ89246.1"/>
    <property type="molecule type" value="mRNA"/>
</dbReference>
<dbReference type="EMBL" id="AK311901">
    <property type="protein sequence ID" value="BAG34842.1"/>
    <property type="molecule type" value="mRNA"/>
</dbReference>
<dbReference type="EMBL" id="CR450326">
    <property type="protein sequence ID" value="CAG29322.1"/>
    <property type="molecule type" value="mRNA"/>
</dbReference>
<dbReference type="EMBL" id="CH471071">
    <property type="protein sequence ID" value="EAW58415.1"/>
    <property type="molecule type" value="Genomic_DNA"/>
</dbReference>
<dbReference type="EMBL" id="BC027918">
    <property type="protein sequence ID" value="AAH27918.1"/>
    <property type="molecule type" value="mRNA"/>
</dbReference>
<dbReference type="CCDS" id="CCDS6571.1"/>
<dbReference type="RefSeq" id="NP_002980.1">
    <property type="nucleotide sequence ID" value="NM_002989.4"/>
</dbReference>
<dbReference type="PDB" id="2L4N">
    <property type="method" value="NMR"/>
    <property type="chains" value="A=24-134"/>
</dbReference>
<dbReference type="PDB" id="5EKI">
    <property type="method" value="X-ray"/>
    <property type="resolution" value="1.90 A"/>
    <property type="chains" value="A/B/C/D/E/F=24-102"/>
</dbReference>
<dbReference type="PDBsum" id="2L4N"/>
<dbReference type="PDBsum" id="5EKI"/>
<dbReference type="BMRB" id="O00585"/>
<dbReference type="SMR" id="O00585"/>
<dbReference type="BioGRID" id="112269">
    <property type="interactions" value="36"/>
</dbReference>
<dbReference type="DIP" id="DIP-5854N"/>
<dbReference type="FunCoup" id="O00585">
    <property type="interactions" value="750"/>
</dbReference>
<dbReference type="IntAct" id="O00585">
    <property type="interactions" value="39"/>
</dbReference>
<dbReference type="MINT" id="O00585"/>
<dbReference type="STRING" id="9606.ENSP00000259607"/>
<dbReference type="iPTMnet" id="O00585"/>
<dbReference type="PhosphoSitePlus" id="O00585"/>
<dbReference type="BioMuta" id="CCL21"/>
<dbReference type="jPOST" id="O00585"/>
<dbReference type="MassIVE" id="O00585"/>
<dbReference type="PaxDb" id="9606-ENSP00000259607"/>
<dbReference type="PeptideAtlas" id="O00585"/>
<dbReference type="ProteomicsDB" id="47987"/>
<dbReference type="Antibodypedia" id="3907">
    <property type="antibodies" value="572 antibodies from 37 providers"/>
</dbReference>
<dbReference type="DNASU" id="6366"/>
<dbReference type="Ensembl" id="ENST00000259607.7">
    <property type="protein sequence ID" value="ENSP00000259607.2"/>
    <property type="gene ID" value="ENSG00000137077.9"/>
</dbReference>
<dbReference type="GeneID" id="6366"/>
<dbReference type="KEGG" id="hsa:6366"/>
<dbReference type="MANE-Select" id="ENST00000259607.7">
    <property type="protein sequence ID" value="ENSP00000259607.2"/>
    <property type="RefSeq nucleotide sequence ID" value="NM_002989.4"/>
    <property type="RefSeq protein sequence ID" value="NP_002980.1"/>
</dbReference>
<dbReference type="UCSC" id="uc003zvo.5">
    <property type="organism name" value="human"/>
</dbReference>
<dbReference type="AGR" id="HGNC:10620"/>
<dbReference type="CTD" id="6366"/>
<dbReference type="DisGeNET" id="6366"/>
<dbReference type="GeneCards" id="CCL21"/>
<dbReference type="HGNC" id="HGNC:10620">
    <property type="gene designation" value="CCL21"/>
</dbReference>
<dbReference type="HPA" id="ENSG00000137077">
    <property type="expression patterns" value="Tissue enriched (lymphoid)"/>
</dbReference>
<dbReference type="MIM" id="602737">
    <property type="type" value="gene"/>
</dbReference>
<dbReference type="neXtProt" id="NX_O00585"/>
<dbReference type="OpenTargets" id="ENSG00000137077"/>
<dbReference type="PharmGKB" id="PA35552"/>
<dbReference type="VEuPathDB" id="HostDB:ENSG00000137077"/>
<dbReference type="eggNOG" id="ENOG502S8D1">
    <property type="taxonomic scope" value="Eukaryota"/>
</dbReference>
<dbReference type="GeneTree" id="ENSGT01130000278316"/>
<dbReference type="InParanoid" id="O00585"/>
<dbReference type="OMA" id="CKRTEQP"/>
<dbReference type="OrthoDB" id="9445745at2759"/>
<dbReference type="PAN-GO" id="O00585">
    <property type="GO annotations" value="15 GO annotations based on evolutionary models"/>
</dbReference>
<dbReference type="PhylomeDB" id="O00585"/>
<dbReference type="TreeFam" id="TF338224"/>
<dbReference type="PathwayCommons" id="O00585"/>
<dbReference type="Reactome" id="R-HSA-380108">
    <property type="pathway name" value="Chemokine receptors bind chemokines"/>
</dbReference>
<dbReference type="Reactome" id="R-HSA-418594">
    <property type="pathway name" value="G alpha (i) signalling events"/>
</dbReference>
<dbReference type="SignaLink" id="O00585"/>
<dbReference type="SIGNOR" id="O00585"/>
<dbReference type="BioGRID-ORCS" id="6366">
    <property type="hits" value="15 hits in 1148 CRISPR screens"/>
</dbReference>
<dbReference type="ChiTaRS" id="CCL21">
    <property type="organism name" value="human"/>
</dbReference>
<dbReference type="EvolutionaryTrace" id="O00585"/>
<dbReference type="GeneWiki" id="CCL21"/>
<dbReference type="GenomeRNAi" id="6366"/>
<dbReference type="Pharos" id="O00585">
    <property type="development level" value="Tbio"/>
</dbReference>
<dbReference type="PRO" id="PR:O00585"/>
<dbReference type="Proteomes" id="UP000005640">
    <property type="component" value="Chromosome 9"/>
</dbReference>
<dbReference type="RNAct" id="O00585">
    <property type="molecule type" value="protein"/>
</dbReference>
<dbReference type="Bgee" id="ENSG00000137077">
    <property type="expression patterns" value="Expressed in lymph node and 147 other cell types or tissues"/>
</dbReference>
<dbReference type="ExpressionAtlas" id="O00585">
    <property type="expression patterns" value="baseline and differential"/>
</dbReference>
<dbReference type="GO" id="GO:0005576">
    <property type="term" value="C:extracellular region"/>
    <property type="evidence" value="ECO:0000304"/>
    <property type="project" value="Reactome"/>
</dbReference>
<dbReference type="GO" id="GO:0005615">
    <property type="term" value="C:extracellular space"/>
    <property type="evidence" value="ECO:0000318"/>
    <property type="project" value="GO_Central"/>
</dbReference>
<dbReference type="GO" id="GO:0048020">
    <property type="term" value="F:CCR chemokine receptor binding"/>
    <property type="evidence" value="ECO:0000318"/>
    <property type="project" value="GO_Central"/>
</dbReference>
<dbReference type="GO" id="GO:0031732">
    <property type="term" value="F:CCR7 chemokine receptor binding"/>
    <property type="evidence" value="ECO:0000250"/>
    <property type="project" value="BHF-UCL"/>
</dbReference>
<dbReference type="GO" id="GO:0008009">
    <property type="term" value="F:chemokine activity"/>
    <property type="evidence" value="ECO:0000314"/>
    <property type="project" value="UniProtKB"/>
</dbReference>
<dbReference type="GO" id="GO:0042379">
    <property type="term" value="F:chemokine receptor binding"/>
    <property type="evidence" value="ECO:0000314"/>
    <property type="project" value="UniProtKB"/>
</dbReference>
<dbReference type="GO" id="GO:0061844">
    <property type="term" value="P:antimicrobial humoral immune response mediated by antimicrobial peptide"/>
    <property type="evidence" value="ECO:0000318"/>
    <property type="project" value="GO_Central"/>
</dbReference>
<dbReference type="GO" id="GO:0038120">
    <property type="term" value="P:CCL21-activated CCR7 signaling pathway"/>
    <property type="evidence" value="ECO:0000314"/>
    <property type="project" value="BHF-UCL"/>
</dbReference>
<dbReference type="GO" id="GO:0060326">
    <property type="term" value="P:cell chemotaxis"/>
    <property type="evidence" value="ECO:0000314"/>
    <property type="project" value="UniProtKB"/>
</dbReference>
<dbReference type="GO" id="GO:0048469">
    <property type="term" value="P:cell maturation"/>
    <property type="evidence" value="ECO:0000250"/>
    <property type="project" value="BHF-UCL"/>
</dbReference>
<dbReference type="GO" id="GO:0007267">
    <property type="term" value="P:cell-cell signaling"/>
    <property type="evidence" value="ECO:0000304"/>
    <property type="project" value="ProtInc"/>
</dbReference>
<dbReference type="GO" id="GO:1990869">
    <property type="term" value="P:cellular response to chemokine"/>
    <property type="evidence" value="ECO:0000250"/>
    <property type="project" value="BHF-UCL"/>
</dbReference>
<dbReference type="GO" id="GO:0071380">
    <property type="term" value="P:cellular response to prostaglandin E stimulus"/>
    <property type="evidence" value="ECO:0000314"/>
    <property type="project" value="BHF-UCL"/>
</dbReference>
<dbReference type="GO" id="GO:0038116">
    <property type="term" value="P:chemokine (C-C motif) ligand 21 signaling pathway"/>
    <property type="evidence" value="ECO:0000250"/>
    <property type="project" value="BHF-UCL"/>
</dbReference>
<dbReference type="GO" id="GO:0070098">
    <property type="term" value="P:chemokine-mediated signaling pathway"/>
    <property type="evidence" value="ECO:0000318"/>
    <property type="project" value="GO_Central"/>
</dbReference>
<dbReference type="GO" id="GO:0002407">
    <property type="term" value="P:dendritic cell chemotaxis"/>
    <property type="evidence" value="ECO:0000314"/>
    <property type="project" value="BHF-UCL"/>
</dbReference>
<dbReference type="GO" id="GO:0097026">
    <property type="term" value="P:dendritic cell dendrite assembly"/>
    <property type="evidence" value="ECO:0000250"/>
    <property type="project" value="BHF-UCL"/>
</dbReference>
<dbReference type="GO" id="GO:0048245">
    <property type="term" value="P:eosinophil chemotaxis"/>
    <property type="evidence" value="ECO:0000318"/>
    <property type="project" value="GO_Central"/>
</dbReference>
<dbReference type="GO" id="GO:0001768">
    <property type="term" value="P:establishment of T cell polarity"/>
    <property type="evidence" value="ECO:0000314"/>
    <property type="project" value="BHF-UCL"/>
</dbReference>
<dbReference type="GO" id="GO:0007186">
    <property type="term" value="P:G protein-coupled receptor signaling pathway"/>
    <property type="evidence" value="ECO:0000314"/>
    <property type="project" value="UniProtKB"/>
</dbReference>
<dbReference type="GO" id="GO:0006955">
    <property type="term" value="P:immune response"/>
    <property type="evidence" value="ECO:0000304"/>
    <property type="project" value="ProtInc"/>
</dbReference>
<dbReference type="GO" id="GO:0001771">
    <property type="term" value="P:immunological synapse formation"/>
    <property type="evidence" value="ECO:0000250"/>
    <property type="project" value="BHF-UCL"/>
</dbReference>
<dbReference type="GO" id="GO:0006954">
    <property type="term" value="P:inflammatory response"/>
    <property type="evidence" value="ECO:0000318"/>
    <property type="project" value="GO_Central"/>
</dbReference>
<dbReference type="GO" id="GO:0035759">
    <property type="term" value="P:mesangial cell-matrix adhesion"/>
    <property type="evidence" value="ECO:0000314"/>
    <property type="project" value="BHF-UCL"/>
</dbReference>
<dbReference type="GO" id="GO:2000669">
    <property type="term" value="P:negative regulation of dendritic cell apoptotic process"/>
    <property type="evidence" value="ECO:0000314"/>
    <property type="project" value="BHF-UCL"/>
</dbReference>
<dbReference type="GO" id="GO:2000548">
    <property type="term" value="P:negative regulation of dendritic cell dendrite assembly"/>
    <property type="evidence" value="ECO:0000250"/>
    <property type="project" value="BHF-UCL"/>
</dbReference>
<dbReference type="GO" id="GO:1903237">
    <property type="term" value="P:negative regulation of leukocyte tethering or rolling"/>
    <property type="evidence" value="ECO:0000314"/>
    <property type="project" value="UniProtKB"/>
</dbReference>
<dbReference type="GO" id="GO:0030838">
    <property type="term" value="P:positive regulation of actin filament polymerization"/>
    <property type="evidence" value="ECO:0000314"/>
    <property type="project" value="BHF-UCL"/>
</dbReference>
<dbReference type="GO" id="GO:0043123">
    <property type="term" value="P:positive regulation of canonical NF-kappaB signal transduction"/>
    <property type="evidence" value="ECO:0000314"/>
    <property type="project" value="BHF-UCL"/>
</dbReference>
<dbReference type="GO" id="GO:0033630">
    <property type="term" value="P:positive regulation of cell adhesion mediated by integrin"/>
    <property type="evidence" value="ECO:0000314"/>
    <property type="project" value="BHF-UCL"/>
</dbReference>
<dbReference type="GO" id="GO:0030335">
    <property type="term" value="P:positive regulation of cell migration"/>
    <property type="evidence" value="ECO:0000318"/>
    <property type="project" value="GO_Central"/>
</dbReference>
<dbReference type="GO" id="GO:2000147">
    <property type="term" value="P:positive regulation of cell motility"/>
    <property type="evidence" value="ECO:0000314"/>
    <property type="project" value="BHF-UCL"/>
</dbReference>
<dbReference type="GO" id="GO:0001954">
    <property type="term" value="P:positive regulation of cell-matrix adhesion"/>
    <property type="evidence" value="ECO:0000314"/>
    <property type="project" value="UniProtKB"/>
</dbReference>
<dbReference type="GO" id="GO:0050921">
    <property type="term" value="P:positive regulation of chemotaxis"/>
    <property type="evidence" value="ECO:0000250"/>
    <property type="project" value="BHF-UCL"/>
</dbReference>
<dbReference type="GO" id="GO:0002606">
    <property type="term" value="P:positive regulation of dendritic cell antigen processing and presentation"/>
    <property type="evidence" value="ECO:0000250"/>
    <property type="project" value="BHF-UCL"/>
</dbReference>
<dbReference type="GO" id="GO:0070374">
    <property type="term" value="P:positive regulation of ERK1 and ERK2 cascade"/>
    <property type="evidence" value="ECO:0000314"/>
    <property type="project" value="BHF-UCL"/>
</dbReference>
<dbReference type="GO" id="GO:0051491">
    <property type="term" value="P:positive regulation of filopodium assembly"/>
    <property type="evidence" value="ECO:0000314"/>
    <property type="project" value="BHF-UCL"/>
</dbReference>
<dbReference type="GO" id="GO:0010560">
    <property type="term" value="P:positive regulation of glycoprotein biosynthetic process"/>
    <property type="evidence" value="ECO:0000250"/>
    <property type="project" value="BHF-UCL"/>
</dbReference>
<dbReference type="GO" id="GO:0046330">
    <property type="term" value="P:positive regulation of JNK cascade"/>
    <property type="evidence" value="ECO:0000314"/>
    <property type="project" value="BHF-UCL"/>
</dbReference>
<dbReference type="GO" id="GO:2000529">
    <property type="term" value="P:positive regulation of myeloid dendritic cell chemotaxis"/>
    <property type="evidence" value="ECO:0000314"/>
    <property type="project" value="BHF-UCL"/>
</dbReference>
<dbReference type="GO" id="GO:0090023">
    <property type="term" value="P:positive regulation of neutrophil chemotaxis"/>
    <property type="evidence" value="ECO:0000314"/>
    <property type="project" value="BHF-UCL"/>
</dbReference>
<dbReference type="GO" id="GO:0051897">
    <property type="term" value="P:positive regulation of phosphatidylinositol 3-kinase/protein kinase B signal transduction"/>
    <property type="evidence" value="ECO:0000314"/>
    <property type="project" value="BHF-UCL"/>
</dbReference>
<dbReference type="GO" id="GO:0141214">
    <property type="term" value="P:positive regulation of phospholipase C/protein kinase C signal transduction"/>
    <property type="evidence" value="ECO:0000314"/>
    <property type="project" value="BHF-UCL"/>
</dbReference>
<dbReference type="GO" id="GO:0031274">
    <property type="term" value="P:positive regulation of pseudopodium assembly"/>
    <property type="evidence" value="ECO:0000314"/>
    <property type="project" value="BHF-UCL"/>
</dbReference>
<dbReference type="GO" id="GO:0048260">
    <property type="term" value="P:positive regulation of receptor-mediated endocytosis"/>
    <property type="evidence" value="ECO:0000250"/>
    <property type="project" value="BHF-UCL"/>
</dbReference>
<dbReference type="GO" id="GO:0010820">
    <property type="term" value="P:positive regulation of T cell chemotaxis"/>
    <property type="evidence" value="ECO:0000250"/>
    <property type="project" value="BHF-UCL"/>
</dbReference>
<dbReference type="GO" id="GO:2000406">
    <property type="term" value="P:positive regulation of T cell migration"/>
    <property type="evidence" value="ECO:0000314"/>
    <property type="project" value="MGI"/>
</dbReference>
<dbReference type="GO" id="GO:0051209">
    <property type="term" value="P:release of sequestered calcium ion into cytosol"/>
    <property type="evidence" value="ECO:0000314"/>
    <property type="project" value="BHF-UCL"/>
</dbReference>
<dbReference type="GO" id="GO:0031529">
    <property type="term" value="P:ruffle organization"/>
    <property type="evidence" value="ECO:0000314"/>
    <property type="project" value="BHF-UCL"/>
</dbReference>
<dbReference type="GO" id="GO:0031295">
    <property type="term" value="P:T cell costimulation"/>
    <property type="evidence" value="ECO:0000250"/>
    <property type="project" value="BHF-UCL"/>
</dbReference>
<dbReference type="CDD" id="cd01119">
    <property type="entry name" value="Chemokine_CC_DCCL"/>
    <property type="match status" value="1"/>
</dbReference>
<dbReference type="DisProt" id="DP00765"/>
<dbReference type="FunFam" id="2.40.50.40:FF:000024">
    <property type="entry name" value="C-C motif chemokine 21"/>
    <property type="match status" value="1"/>
</dbReference>
<dbReference type="Gene3D" id="2.40.50.40">
    <property type="match status" value="1"/>
</dbReference>
<dbReference type="InterPro" id="IPR039809">
    <property type="entry name" value="Chemokine_b/g/d"/>
</dbReference>
<dbReference type="InterPro" id="IPR034133">
    <property type="entry name" value="Chemokine_CC_DCCL"/>
</dbReference>
<dbReference type="InterPro" id="IPR001811">
    <property type="entry name" value="Chemokine_IL8-like_dom"/>
</dbReference>
<dbReference type="InterPro" id="IPR036048">
    <property type="entry name" value="Interleukin_8-like_sf"/>
</dbReference>
<dbReference type="PANTHER" id="PTHR12015:SF72">
    <property type="entry name" value="C-C MOTIF CHEMOKINE 21"/>
    <property type="match status" value="1"/>
</dbReference>
<dbReference type="PANTHER" id="PTHR12015">
    <property type="entry name" value="SMALL INDUCIBLE CYTOKINE A"/>
    <property type="match status" value="1"/>
</dbReference>
<dbReference type="Pfam" id="PF00048">
    <property type="entry name" value="IL8"/>
    <property type="match status" value="1"/>
</dbReference>
<dbReference type="SMART" id="SM00199">
    <property type="entry name" value="SCY"/>
    <property type="match status" value="1"/>
</dbReference>
<dbReference type="SUPFAM" id="SSF54117">
    <property type="entry name" value="Interleukin 8-like chemokines"/>
    <property type="match status" value="1"/>
</dbReference>
<protein>
    <recommendedName>
        <fullName>C-C motif chemokine 21</fullName>
    </recommendedName>
    <alternativeName>
        <fullName>6Ckine</fullName>
    </alternativeName>
    <alternativeName>
        <fullName>Beta-chemokine exodus-2</fullName>
    </alternativeName>
    <alternativeName>
        <fullName>Secondary lymphoid-tissue chemokine</fullName>
        <shortName>SLC</shortName>
    </alternativeName>
    <alternativeName>
        <fullName>Small-inducible cytokine A21</fullName>
    </alternativeName>
</protein>
<name>CCL21_HUMAN</name>
<keyword id="KW-0002">3D-structure</keyword>
<keyword id="KW-0145">Chemotaxis</keyword>
<keyword id="KW-0202">Cytokine</keyword>
<keyword id="KW-0903">Direct protein sequencing</keyword>
<keyword id="KW-1015">Disulfide bond</keyword>
<keyword id="KW-0395">Inflammatory response</keyword>
<keyword id="KW-1267">Proteomics identification</keyword>
<keyword id="KW-1185">Reference proteome</keyword>
<keyword id="KW-0964">Secreted</keyword>
<keyword id="KW-0732">Signal</keyword>
<organism>
    <name type="scientific">Homo sapiens</name>
    <name type="common">Human</name>
    <dbReference type="NCBI Taxonomy" id="9606"/>
    <lineage>
        <taxon>Eukaryota</taxon>
        <taxon>Metazoa</taxon>
        <taxon>Chordata</taxon>
        <taxon>Craniata</taxon>
        <taxon>Vertebrata</taxon>
        <taxon>Euteleostomi</taxon>
        <taxon>Mammalia</taxon>
        <taxon>Eutheria</taxon>
        <taxon>Euarchontoglires</taxon>
        <taxon>Primates</taxon>
        <taxon>Haplorrhini</taxon>
        <taxon>Catarrhini</taxon>
        <taxon>Hominidae</taxon>
        <taxon>Homo</taxon>
    </lineage>
</organism>